<proteinExistence type="inferred from homology"/>
<keyword id="KW-0285">Flavoprotein</keyword>
<keyword id="KW-0288">FMN</keyword>
<keyword id="KW-0521">NADP</keyword>
<keyword id="KW-0560">Oxidoreductase</keyword>
<keyword id="KW-1185">Reference proteome</keyword>
<keyword id="KW-0694">RNA-binding</keyword>
<keyword id="KW-0819">tRNA processing</keyword>
<keyword id="KW-0820">tRNA-binding</keyword>
<evidence type="ECO:0000255" key="1">
    <source>
        <dbReference type="HAMAP-Rule" id="MF_02042"/>
    </source>
</evidence>
<gene>
    <name evidence="1" type="primary">dusB</name>
    <name type="ordered locus">SO_0394</name>
</gene>
<dbReference type="EC" id="1.3.1.-" evidence="1"/>
<dbReference type="EMBL" id="AE014299">
    <property type="protein sequence ID" value="AAN53477.1"/>
    <property type="molecule type" value="Genomic_DNA"/>
</dbReference>
<dbReference type="RefSeq" id="NP_716032.1">
    <property type="nucleotide sequence ID" value="NC_004347.2"/>
</dbReference>
<dbReference type="RefSeq" id="WP_011070754.1">
    <property type="nucleotide sequence ID" value="NC_004347.2"/>
</dbReference>
<dbReference type="SMR" id="Q8EJR8"/>
<dbReference type="STRING" id="211586.SO_0394"/>
<dbReference type="PaxDb" id="211586-SO_0394"/>
<dbReference type="KEGG" id="son:SO_0394"/>
<dbReference type="PATRIC" id="fig|211586.12.peg.384"/>
<dbReference type="eggNOG" id="COG0042">
    <property type="taxonomic scope" value="Bacteria"/>
</dbReference>
<dbReference type="HOGENOM" id="CLU_013299_0_1_6"/>
<dbReference type="OrthoDB" id="9764501at2"/>
<dbReference type="PhylomeDB" id="Q8EJR8"/>
<dbReference type="BioCyc" id="SONE211586:G1GMP-379-MONOMER"/>
<dbReference type="Proteomes" id="UP000008186">
    <property type="component" value="Chromosome"/>
</dbReference>
<dbReference type="GO" id="GO:0050660">
    <property type="term" value="F:flavin adenine dinucleotide binding"/>
    <property type="evidence" value="ECO:0007669"/>
    <property type="project" value="InterPro"/>
</dbReference>
<dbReference type="GO" id="GO:0010181">
    <property type="term" value="F:FMN binding"/>
    <property type="evidence" value="ECO:0007669"/>
    <property type="project" value="UniProtKB-UniRule"/>
</dbReference>
<dbReference type="GO" id="GO:0000049">
    <property type="term" value="F:tRNA binding"/>
    <property type="evidence" value="ECO:0007669"/>
    <property type="project" value="UniProtKB-UniRule"/>
</dbReference>
<dbReference type="GO" id="GO:0017150">
    <property type="term" value="F:tRNA dihydrouridine synthase activity"/>
    <property type="evidence" value="ECO:0007669"/>
    <property type="project" value="UniProtKB-UniRule"/>
</dbReference>
<dbReference type="CDD" id="cd02801">
    <property type="entry name" value="DUS_like_FMN"/>
    <property type="match status" value="1"/>
</dbReference>
<dbReference type="FunFam" id="3.20.20.70:FF:000051">
    <property type="entry name" value="tRNA-dihydrouridine synthase B"/>
    <property type="match status" value="1"/>
</dbReference>
<dbReference type="Gene3D" id="3.20.20.70">
    <property type="entry name" value="Aldolase class I"/>
    <property type="match status" value="1"/>
</dbReference>
<dbReference type="Gene3D" id="1.10.1200.80">
    <property type="entry name" value="Putative flavin oxidoreducatase, domain 2"/>
    <property type="match status" value="1"/>
</dbReference>
<dbReference type="HAMAP" id="MF_02042">
    <property type="entry name" value="DusB_subfam"/>
    <property type="match status" value="1"/>
</dbReference>
<dbReference type="InterPro" id="IPR013785">
    <property type="entry name" value="Aldolase_TIM"/>
</dbReference>
<dbReference type="InterPro" id="IPR035587">
    <property type="entry name" value="DUS-like_FMN-bd"/>
</dbReference>
<dbReference type="InterPro" id="IPR001269">
    <property type="entry name" value="DUS_fam"/>
</dbReference>
<dbReference type="InterPro" id="IPR032887">
    <property type="entry name" value="DusB"/>
</dbReference>
<dbReference type="InterPro" id="IPR004652">
    <property type="entry name" value="DusB-like"/>
</dbReference>
<dbReference type="InterPro" id="IPR024036">
    <property type="entry name" value="tRNA-dHydroUridine_Synthase_C"/>
</dbReference>
<dbReference type="InterPro" id="IPR018517">
    <property type="entry name" value="tRNA_hU_synthase_CS"/>
</dbReference>
<dbReference type="NCBIfam" id="TIGR00737">
    <property type="entry name" value="nifR3_yhdG"/>
    <property type="match status" value="1"/>
</dbReference>
<dbReference type="PANTHER" id="PTHR45846">
    <property type="entry name" value="TRNA-DIHYDROURIDINE(47) SYNTHASE [NAD(P)(+)]-LIKE"/>
    <property type="match status" value="1"/>
</dbReference>
<dbReference type="PANTHER" id="PTHR45846:SF1">
    <property type="entry name" value="TRNA-DIHYDROURIDINE(47) SYNTHASE [NAD(P)(+)]-LIKE"/>
    <property type="match status" value="1"/>
</dbReference>
<dbReference type="Pfam" id="PF01207">
    <property type="entry name" value="Dus"/>
    <property type="match status" value="1"/>
</dbReference>
<dbReference type="PIRSF" id="PIRSF006621">
    <property type="entry name" value="Dus"/>
    <property type="match status" value="1"/>
</dbReference>
<dbReference type="SUPFAM" id="SSF51395">
    <property type="entry name" value="FMN-linked oxidoreductases"/>
    <property type="match status" value="1"/>
</dbReference>
<dbReference type="PROSITE" id="PS01136">
    <property type="entry name" value="UPF0034"/>
    <property type="match status" value="1"/>
</dbReference>
<protein>
    <recommendedName>
        <fullName evidence="1">tRNA-dihydrouridine synthase B</fullName>
        <ecNumber evidence="1">1.3.1.-</ecNumber>
    </recommendedName>
</protein>
<comment type="function">
    <text evidence="1">Catalyzes the synthesis of 5,6-dihydrouridine (D), a modified base found in the D-loop of most tRNAs, via the reduction of the C5-C6 double bond in target uridines.</text>
</comment>
<comment type="catalytic activity">
    <reaction evidence="1">
        <text>a 5,6-dihydrouridine in tRNA + NAD(+) = a uridine in tRNA + NADH + H(+)</text>
        <dbReference type="Rhea" id="RHEA:54452"/>
        <dbReference type="Rhea" id="RHEA-COMP:13339"/>
        <dbReference type="Rhea" id="RHEA-COMP:13887"/>
        <dbReference type="ChEBI" id="CHEBI:15378"/>
        <dbReference type="ChEBI" id="CHEBI:57540"/>
        <dbReference type="ChEBI" id="CHEBI:57945"/>
        <dbReference type="ChEBI" id="CHEBI:65315"/>
        <dbReference type="ChEBI" id="CHEBI:74443"/>
    </reaction>
</comment>
<comment type="catalytic activity">
    <reaction evidence="1">
        <text>a 5,6-dihydrouridine in tRNA + NADP(+) = a uridine in tRNA + NADPH + H(+)</text>
        <dbReference type="Rhea" id="RHEA:23624"/>
        <dbReference type="Rhea" id="RHEA-COMP:13339"/>
        <dbReference type="Rhea" id="RHEA-COMP:13887"/>
        <dbReference type="ChEBI" id="CHEBI:15378"/>
        <dbReference type="ChEBI" id="CHEBI:57783"/>
        <dbReference type="ChEBI" id="CHEBI:58349"/>
        <dbReference type="ChEBI" id="CHEBI:65315"/>
        <dbReference type="ChEBI" id="CHEBI:74443"/>
    </reaction>
</comment>
<comment type="cofactor">
    <cofactor evidence="1">
        <name>FMN</name>
        <dbReference type="ChEBI" id="CHEBI:58210"/>
    </cofactor>
</comment>
<comment type="similarity">
    <text evidence="1">Belongs to the Dus family. DusB subfamily.</text>
</comment>
<reference key="1">
    <citation type="journal article" date="2002" name="Nat. Biotechnol.">
        <title>Genome sequence of the dissimilatory metal ion-reducing bacterium Shewanella oneidensis.</title>
        <authorList>
            <person name="Heidelberg J.F."/>
            <person name="Paulsen I.T."/>
            <person name="Nelson K.E."/>
            <person name="Gaidos E.J."/>
            <person name="Nelson W.C."/>
            <person name="Read T.D."/>
            <person name="Eisen J.A."/>
            <person name="Seshadri R."/>
            <person name="Ward N.L."/>
            <person name="Methe B.A."/>
            <person name="Clayton R.A."/>
            <person name="Meyer T."/>
            <person name="Tsapin A."/>
            <person name="Scott J."/>
            <person name="Beanan M.J."/>
            <person name="Brinkac L.M."/>
            <person name="Daugherty S.C."/>
            <person name="DeBoy R.T."/>
            <person name="Dodson R.J."/>
            <person name="Durkin A.S."/>
            <person name="Haft D.H."/>
            <person name="Kolonay J.F."/>
            <person name="Madupu R."/>
            <person name="Peterson J.D."/>
            <person name="Umayam L.A."/>
            <person name="White O."/>
            <person name="Wolf A.M."/>
            <person name="Vamathevan J.J."/>
            <person name="Weidman J.F."/>
            <person name="Impraim M."/>
            <person name="Lee K."/>
            <person name="Berry K.J."/>
            <person name="Lee C."/>
            <person name="Mueller J."/>
            <person name="Khouri H.M."/>
            <person name="Gill J."/>
            <person name="Utterback T.R."/>
            <person name="McDonald L.A."/>
            <person name="Feldblyum T.V."/>
            <person name="Smith H.O."/>
            <person name="Venter J.C."/>
            <person name="Nealson K.H."/>
            <person name="Fraser C.M."/>
        </authorList>
    </citation>
    <scope>NUCLEOTIDE SEQUENCE [LARGE SCALE GENOMIC DNA]</scope>
    <source>
        <strain>ATCC 700550 / JCM 31522 / CIP 106686 / LMG 19005 / NCIMB 14063 / MR-1</strain>
    </source>
</reference>
<sequence>MQIGPYQLKNQLIVAPMAGVTDQAFRNLCLRYGAALAVSEMLSSNPEVWDTDKSRQRMTHSGEEGIRSVQIAGADPELMAQAAQFNVEQGAHIIDINMGCPAKKVNKKLAGSALMQNPPLVKDILQAVVAAVDVPVTLKIRTGWEPEHRNGVQIAQIAEDCGIASLAVHGRTRQCMYKGNAEYDTIKAIKQNVSIPVVANGDIDSPEKARFVLDYTGVDALMIGRGAQGRPWIFREIQHYLETGNKLAPIEVAEQRQVMLEHLTKLYDLYGEYKGIRFARKHIGWYLDQEDQRQFRADFNQLETAAEQYSLVEYYFDELVQN</sequence>
<accession>Q8EJR8</accession>
<name>DUSB_SHEON</name>
<feature type="chain" id="PRO_0000162099" description="tRNA-dihydrouridine synthase B">
    <location>
        <begin position="1"/>
        <end position="322"/>
    </location>
</feature>
<feature type="active site" description="Proton donor" evidence="1">
    <location>
        <position position="100"/>
    </location>
</feature>
<feature type="binding site" evidence="1">
    <location>
        <begin position="16"/>
        <end position="18"/>
    </location>
    <ligand>
        <name>FMN</name>
        <dbReference type="ChEBI" id="CHEBI:58210"/>
    </ligand>
</feature>
<feature type="binding site" evidence="1">
    <location>
        <position position="70"/>
    </location>
    <ligand>
        <name>FMN</name>
        <dbReference type="ChEBI" id="CHEBI:58210"/>
    </ligand>
</feature>
<feature type="binding site" evidence="1">
    <location>
        <position position="139"/>
    </location>
    <ligand>
        <name>FMN</name>
        <dbReference type="ChEBI" id="CHEBI:58210"/>
    </ligand>
</feature>
<feature type="binding site" evidence="1">
    <location>
        <begin position="200"/>
        <end position="202"/>
    </location>
    <ligand>
        <name>FMN</name>
        <dbReference type="ChEBI" id="CHEBI:58210"/>
    </ligand>
</feature>
<feature type="binding site" evidence="1">
    <location>
        <begin position="224"/>
        <end position="225"/>
    </location>
    <ligand>
        <name>FMN</name>
        <dbReference type="ChEBI" id="CHEBI:58210"/>
    </ligand>
</feature>
<organism>
    <name type="scientific">Shewanella oneidensis (strain ATCC 700550 / JCM 31522 / CIP 106686 / LMG 19005 / NCIMB 14063 / MR-1)</name>
    <dbReference type="NCBI Taxonomy" id="211586"/>
    <lineage>
        <taxon>Bacteria</taxon>
        <taxon>Pseudomonadati</taxon>
        <taxon>Pseudomonadota</taxon>
        <taxon>Gammaproteobacteria</taxon>
        <taxon>Alteromonadales</taxon>
        <taxon>Shewanellaceae</taxon>
        <taxon>Shewanella</taxon>
    </lineage>
</organism>